<organism>
    <name type="scientific">Danio rerio</name>
    <name type="common">Zebrafish</name>
    <name type="synonym">Brachydanio rerio</name>
    <dbReference type="NCBI Taxonomy" id="7955"/>
    <lineage>
        <taxon>Eukaryota</taxon>
        <taxon>Metazoa</taxon>
        <taxon>Chordata</taxon>
        <taxon>Craniata</taxon>
        <taxon>Vertebrata</taxon>
        <taxon>Euteleostomi</taxon>
        <taxon>Actinopterygii</taxon>
        <taxon>Neopterygii</taxon>
        <taxon>Teleostei</taxon>
        <taxon>Ostariophysi</taxon>
        <taxon>Cypriniformes</taxon>
        <taxon>Danionidae</taxon>
        <taxon>Danioninae</taxon>
        <taxon>Danio</taxon>
    </lineage>
</organism>
<dbReference type="EMBL" id="AF536198">
    <property type="protein sequence ID" value="AAN16321.1"/>
    <property type="molecule type" value="mRNA"/>
</dbReference>
<dbReference type="EMBL" id="BC096856">
    <property type="protein sequence ID" value="AAH96856.1"/>
    <property type="molecule type" value="mRNA"/>
</dbReference>
<dbReference type="EMBL" id="BC153537">
    <property type="protein sequence ID" value="AAI53538.1"/>
    <property type="molecule type" value="mRNA"/>
</dbReference>
<dbReference type="RefSeq" id="NP_937852.1">
    <property type="nucleotide sequence ID" value="NM_198209.2"/>
</dbReference>
<dbReference type="RefSeq" id="XP_068069276.1">
    <property type="nucleotide sequence ID" value="XM_068213175.1"/>
</dbReference>
<dbReference type="SMR" id="Q8AYB8"/>
<dbReference type="FunCoup" id="Q8AYB8">
    <property type="interactions" value="516"/>
</dbReference>
<dbReference type="STRING" id="7955.ENSDARP00000112208"/>
<dbReference type="PaxDb" id="7955-ENSDARP00000112208"/>
<dbReference type="Ensembl" id="ENSDART00000125203">
    <property type="protein sequence ID" value="ENSDARP00000112208"/>
    <property type="gene ID" value="ENSDARG00000089368"/>
</dbReference>
<dbReference type="Ensembl" id="ENSDART00000193575">
    <property type="protein sequence ID" value="ENSDARP00000156504"/>
    <property type="gene ID" value="ENSDARG00000089368"/>
</dbReference>
<dbReference type="GeneID" id="386589"/>
<dbReference type="KEGG" id="dre:386589"/>
<dbReference type="AGR" id="ZFIN:ZDB-GENE-031016-2"/>
<dbReference type="CTD" id="84525"/>
<dbReference type="ZFIN" id="ZDB-GENE-031016-2">
    <property type="gene designation" value="hopx"/>
</dbReference>
<dbReference type="eggNOG" id="KOG0490">
    <property type="taxonomic scope" value="Eukaryota"/>
</dbReference>
<dbReference type="HOGENOM" id="CLU_193231_0_0_1"/>
<dbReference type="InParanoid" id="Q8AYB8"/>
<dbReference type="OMA" id="LRMAKWR"/>
<dbReference type="OrthoDB" id="6159439at2759"/>
<dbReference type="PhylomeDB" id="Q8AYB8"/>
<dbReference type="TreeFam" id="TF330730"/>
<dbReference type="PRO" id="PR:Q8AYB8"/>
<dbReference type="Proteomes" id="UP000000437">
    <property type="component" value="Chromosome 14"/>
</dbReference>
<dbReference type="Bgee" id="ENSDARG00000089368">
    <property type="expression patterns" value="Expressed in pharyngeal gill and 27 other cell types or tissues"/>
</dbReference>
<dbReference type="GO" id="GO:0005737">
    <property type="term" value="C:cytoplasm"/>
    <property type="evidence" value="ECO:0007669"/>
    <property type="project" value="UniProtKB-SubCell"/>
</dbReference>
<dbReference type="GO" id="GO:0005634">
    <property type="term" value="C:nucleus"/>
    <property type="evidence" value="ECO:0000318"/>
    <property type="project" value="GO_Central"/>
</dbReference>
<dbReference type="GO" id="GO:0003677">
    <property type="term" value="F:DNA binding"/>
    <property type="evidence" value="ECO:0007669"/>
    <property type="project" value="UniProtKB-KW"/>
</dbReference>
<dbReference type="GO" id="GO:0030154">
    <property type="term" value="P:cell differentiation"/>
    <property type="evidence" value="ECO:0007669"/>
    <property type="project" value="InterPro"/>
</dbReference>
<dbReference type="GO" id="GO:0007507">
    <property type="term" value="P:heart development"/>
    <property type="evidence" value="ECO:0000315"/>
    <property type="project" value="ZFIN"/>
</dbReference>
<dbReference type="GO" id="GO:0006357">
    <property type="term" value="P:regulation of transcription by RNA polymerase II"/>
    <property type="evidence" value="ECO:0000318"/>
    <property type="project" value="GO_Central"/>
</dbReference>
<dbReference type="CDD" id="cd00086">
    <property type="entry name" value="homeodomain"/>
    <property type="match status" value="1"/>
</dbReference>
<dbReference type="FunFam" id="1.10.10.60:FF:000213">
    <property type="entry name" value="Homeodomain-only protein"/>
    <property type="match status" value="1"/>
</dbReference>
<dbReference type="Gene3D" id="1.10.10.60">
    <property type="entry name" value="Homeodomain-like"/>
    <property type="match status" value="1"/>
</dbReference>
<dbReference type="InterPro" id="IPR001356">
    <property type="entry name" value="HD"/>
</dbReference>
<dbReference type="InterPro" id="IPR009057">
    <property type="entry name" value="Homeodomain-like_sf"/>
</dbReference>
<dbReference type="InterPro" id="IPR039162">
    <property type="entry name" value="HOPX"/>
</dbReference>
<dbReference type="PANTHER" id="PTHR21408">
    <property type="entry name" value="HOMEODOMAIN-ONLY PROTEIN"/>
    <property type="match status" value="1"/>
</dbReference>
<dbReference type="PANTHER" id="PTHR21408:SF1">
    <property type="entry name" value="HOMEODOMAIN-ONLY PROTEIN"/>
    <property type="match status" value="1"/>
</dbReference>
<dbReference type="Pfam" id="PF00046">
    <property type="entry name" value="Homeodomain"/>
    <property type="match status" value="1"/>
</dbReference>
<dbReference type="SMART" id="SM00389">
    <property type="entry name" value="HOX"/>
    <property type="match status" value="1"/>
</dbReference>
<dbReference type="SUPFAM" id="SSF46689">
    <property type="entry name" value="Homeodomain-like"/>
    <property type="match status" value="1"/>
</dbReference>
<dbReference type="PROSITE" id="PS50071">
    <property type="entry name" value="HOMEOBOX_2"/>
    <property type="match status" value="1"/>
</dbReference>
<keyword id="KW-0963">Cytoplasm</keyword>
<keyword id="KW-0217">Developmental protein</keyword>
<keyword id="KW-0371">Homeobox</keyword>
<keyword id="KW-0539">Nucleus</keyword>
<keyword id="KW-1185">Reference proteome</keyword>
<keyword id="KW-0678">Repressor</keyword>
<keyword id="KW-0804">Transcription</keyword>
<keyword id="KW-0805">Transcription regulation</keyword>
<proteinExistence type="inferred from homology"/>
<evidence type="ECO:0000250" key="1">
    <source>
        <dbReference type="UniProtKB" id="Q8R1H0"/>
    </source>
</evidence>
<evidence type="ECO:0000250" key="2">
    <source>
        <dbReference type="UniProtKB" id="Q9BPY8"/>
    </source>
</evidence>
<evidence type="ECO:0000255" key="3">
    <source>
        <dbReference type="PROSITE-ProRule" id="PRU00108"/>
    </source>
</evidence>
<evidence type="ECO:0000269" key="4">
    <source>
    </source>
</evidence>
<accession>Q8AYB8</accession>
<accession>A8E5B8</accession>
<accession>Q4V9K4</accession>
<protein>
    <recommendedName>
        <fullName>Homeodomain-only protein</fullName>
    </recommendedName>
</protein>
<name>HOP_DANRE</name>
<comment type="function">
    <text evidence="2 4">Atypical homeodomain protein which does not bind DNA and is required to modulate cardiac growth and development. May act via an interaction with SRF, leading to modulate the expression of SRF-dependent cardiac-specific genes and cardiac development (PubMed:12297045). May act as a co-chaperone for HSPA1A and HSPA1B chaperone proteins and assist in chaperone-mediated protein refolding (By similarity).</text>
</comment>
<comment type="subcellular location">
    <subcellularLocation>
        <location evidence="1">Nucleus</location>
    </subcellularLocation>
    <subcellularLocation>
        <location evidence="1">Cytoplasm</location>
    </subcellularLocation>
</comment>
<gene>
    <name type="primary">hopx</name>
    <name type="synonym">hop</name>
</gene>
<sequence>MSANGNAALGVRLTEDQVKVLEENFTKVSKHPDETTLMLIAAECGLSEEQTAVWFRMRNAQWRKAEGLPAELGSVKD</sequence>
<feature type="chain" id="PRO_0000049134" description="Homeodomain-only protein">
    <location>
        <begin position="1"/>
        <end position="77"/>
    </location>
</feature>
<feature type="DNA-binding region" description="Homeobox; degenerate" evidence="3">
    <location>
        <begin position="7"/>
        <end position="65"/>
    </location>
</feature>
<reference key="1">
    <citation type="journal article" date="2002" name="Cell">
        <title>Hop is an unusual homeobox gene that modulates cardiac development.</title>
        <authorList>
            <person name="Chen F."/>
            <person name="Kook H."/>
            <person name="Milewski R."/>
            <person name="Gitler A.D."/>
            <person name="Lu M.M."/>
            <person name="Li J."/>
            <person name="Nazarian R."/>
            <person name="Schnepp R."/>
            <person name="Jen K."/>
            <person name="Biben C."/>
            <person name="Runke G."/>
            <person name="Mackay J.P."/>
            <person name="Novotny J."/>
            <person name="Schwartz R.J."/>
            <person name="Harvey R.P."/>
            <person name="Mullins M.C."/>
            <person name="Epstein J.A."/>
        </authorList>
    </citation>
    <scope>NUCLEOTIDE SEQUENCE [MRNA]</scope>
    <scope>FUNCTION</scope>
</reference>
<reference key="2">
    <citation type="submission" date="2007-09" db="EMBL/GenBank/DDBJ databases">
        <authorList>
            <consortium name="NIH - Zebrafish Gene Collection (ZGC) project"/>
        </authorList>
    </citation>
    <scope>NUCLEOTIDE SEQUENCE [LARGE SCALE MRNA]</scope>
    <source>
        <strain>WIK</strain>
        <tissue>Brain</tissue>
    </source>
</reference>